<proteinExistence type="predicted"/>
<organism>
    <name type="scientific">Mycobacterium tuberculosis (strain ATCC 25618 / H37Rv)</name>
    <dbReference type="NCBI Taxonomy" id="83332"/>
    <lineage>
        <taxon>Bacteria</taxon>
        <taxon>Bacillati</taxon>
        <taxon>Actinomycetota</taxon>
        <taxon>Actinomycetes</taxon>
        <taxon>Mycobacteriales</taxon>
        <taxon>Mycobacteriaceae</taxon>
        <taxon>Mycobacterium</taxon>
        <taxon>Mycobacterium tuberculosis complex</taxon>
    </lineage>
</organism>
<reference key="1">
    <citation type="journal article" date="1998" name="Nature">
        <title>Deciphering the biology of Mycobacterium tuberculosis from the complete genome sequence.</title>
        <authorList>
            <person name="Cole S.T."/>
            <person name="Brosch R."/>
            <person name="Parkhill J."/>
            <person name="Garnier T."/>
            <person name="Churcher C.M."/>
            <person name="Harris D.E."/>
            <person name="Gordon S.V."/>
            <person name="Eiglmeier K."/>
            <person name="Gas S."/>
            <person name="Barry C.E. III"/>
            <person name="Tekaia F."/>
            <person name="Badcock K."/>
            <person name="Basham D."/>
            <person name="Brown D."/>
            <person name="Chillingworth T."/>
            <person name="Connor R."/>
            <person name="Davies R.M."/>
            <person name="Devlin K."/>
            <person name="Feltwell T."/>
            <person name="Gentles S."/>
            <person name="Hamlin N."/>
            <person name="Holroyd S."/>
            <person name="Hornsby T."/>
            <person name="Jagels K."/>
            <person name="Krogh A."/>
            <person name="McLean J."/>
            <person name="Moule S."/>
            <person name="Murphy L.D."/>
            <person name="Oliver S."/>
            <person name="Osborne J."/>
            <person name="Quail M.A."/>
            <person name="Rajandream M.A."/>
            <person name="Rogers J."/>
            <person name="Rutter S."/>
            <person name="Seeger K."/>
            <person name="Skelton S."/>
            <person name="Squares S."/>
            <person name="Squares R."/>
            <person name="Sulston J.E."/>
            <person name="Taylor K."/>
            <person name="Whitehead S."/>
            <person name="Barrell B.G."/>
        </authorList>
    </citation>
    <scope>NUCLEOTIDE SEQUENCE [LARGE SCALE GENOMIC DNA]</scope>
    <source>
        <strain>ATCC 25618 / H37Rv</strain>
    </source>
</reference>
<feature type="chain" id="PRO_0000103759" description="Uncharacterized protein Rv0963c">
    <location>
        <begin position="1"/>
        <end position="266"/>
    </location>
</feature>
<gene>
    <name type="ordered locus">Rv0963c</name>
    <name type="ORF">MTCY10D7.11</name>
</gene>
<sequence>MLQRELTRLQNGWLSRDGVWHTDTDKLADLRALRDTLAAHPGTSLILLDTASDPRKVLAAVGVGDVDNAERVGVTMGGLNTRVSSSVGDMVKEAGIQRAKAAELRERAGWPNYDAVASIAWLGYDAPDGLKDVMHDWSARDAAGPLNRFDKGLAATTNVSDQHITAFGHSYGSLVTSLALQQGAPVSDVVLYGSPGTELTHASQLGVEPGHAFYMIGVNDHVANTIPEFGAFGSAPQDVPGMTQLSVNTGLAPGPLLGDGQLHERA</sequence>
<protein>
    <recommendedName>
        <fullName>Uncharacterized protein Rv0963c</fullName>
    </recommendedName>
</protein>
<accession>P9WKM7</accession>
<accession>L0T885</accession>
<accession>P64777</accession>
<accession>P71547</accession>
<dbReference type="EMBL" id="AL123456">
    <property type="protein sequence ID" value="CCP43712.1"/>
    <property type="molecule type" value="Genomic_DNA"/>
</dbReference>
<dbReference type="PIR" id="A70718">
    <property type="entry name" value="A70718"/>
</dbReference>
<dbReference type="RefSeq" id="NP_215478.1">
    <property type="nucleotide sequence ID" value="NC_000962.3"/>
</dbReference>
<dbReference type="RefSeq" id="WP_003404915.1">
    <property type="nucleotide sequence ID" value="NC_000962.3"/>
</dbReference>
<dbReference type="STRING" id="83332.Rv0963c"/>
<dbReference type="ESTHER" id="myctu-y963">
    <property type="family name" value="Duf_1023"/>
</dbReference>
<dbReference type="PaxDb" id="83332-Rv0963c"/>
<dbReference type="DNASU" id="885184"/>
<dbReference type="GeneID" id="885184"/>
<dbReference type="KEGG" id="mtu:Rv0963c"/>
<dbReference type="KEGG" id="mtv:RVBD_0963c"/>
<dbReference type="TubercuList" id="Rv0963c"/>
<dbReference type="eggNOG" id="COG1506">
    <property type="taxonomic scope" value="Bacteria"/>
</dbReference>
<dbReference type="InParanoid" id="P9WKM7"/>
<dbReference type="OrthoDB" id="5969911at2"/>
<dbReference type="PhylomeDB" id="P9WKM7"/>
<dbReference type="Proteomes" id="UP000001584">
    <property type="component" value="Chromosome"/>
</dbReference>
<dbReference type="InterPro" id="IPR029058">
    <property type="entry name" value="AB_hydrolase_fold"/>
</dbReference>
<dbReference type="InterPro" id="IPR010427">
    <property type="entry name" value="DUF1023"/>
</dbReference>
<dbReference type="Pfam" id="PF06259">
    <property type="entry name" value="Abhydrolase_8"/>
    <property type="match status" value="1"/>
</dbReference>
<dbReference type="SUPFAM" id="SSF53474">
    <property type="entry name" value="alpha/beta-Hydrolases"/>
    <property type="match status" value="1"/>
</dbReference>
<name>Y963_MYCTU</name>
<keyword id="KW-1185">Reference proteome</keyword>